<reference key="1">
    <citation type="journal article" date="2009" name="J. Bacteriol.">
        <title>Genomic sequencing reveals regulatory mutations and recombinational events in the widely used MC4100 lineage of Escherichia coli K-12.</title>
        <authorList>
            <person name="Ferenci T."/>
            <person name="Zhou Z."/>
            <person name="Betteridge T."/>
            <person name="Ren Y."/>
            <person name="Liu Y."/>
            <person name="Feng L."/>
            <person name="Reeves P.R."/>
            <person name="Wang L."/>
        </authorList>
    </citation>
    <scope>NUCLEOTIDE SEQUENCE [LARGE SCALE GENOMIC DNA]</scope>
    <source>
        <strain>K12 / MC4100 / BW2952</strain>
    </source>
</reference>
<dbReference type="EMBL" id="CP001396">
    <property type="protein sequence ID" value="ACR63818.1"/>
    <property type="molecule type" value="Genomic_DNA"/>
</dbReference>
<dbReference type="RefSeq" id="WP_000276149.1">
    <property type="nucleotide sequence ID" value="NC_012759.1"/>
</dbReference>
<dbReference type="SMR" id="C4ZY63"/>
<dbReference type="GeneID" id="93775748"/>
<dbReference type="KEGG" id="ebw:BWG_1415"/>
<dbReference type="HOGENOM" id="CLU_133067_0_0_6"/>
<dbReference type="GO" id="GO:0005886">
    <property type="term" value="C:plasma membrane"/>
    <property type="evidence" value="ECO:0007669"/>
    <property type="project" value="UniProtKB-SubCell"/>
</dbReference>
<dbReference type="GO" id="GO:0015199">
    <property type="term" value="F:amino-acid betaine transmembrane transporter activity"/>
    <property type="evidence" value="ECO:0007669"/>
    <property type="project" value="TreeGrafter"/>
</dbReference>
<dbReference type="GO" id="GO:0015297">
    <property type="term" value="F:antiporter activity"/>
    <property type="evidence" value="ECO:0007669"/>
    <property type="project" value="TreeGrafter"/>
</dbReference>
<dbReference type="GO" id="GO:0015220">
    <property type="term" value="F:choline transmembrane transporter activity"/>
    <property type="evidence" value="ECO:0007669"/>
    <property type="project" value="TreeGrafter"/>
</dbReference>
<dbReference type="GO" id="GO:0015606">
    <property type="term" value="F:spermidine transmembrane transporter activity"/>
    <property type="evidence" value="ECO:0007669"/>
    <property type="project" value="UniProtKB-UniRule"/>
</dbReference>
<dbReference type="GO" id="GO:0031460">
    <property type="term" value="P:glycine betaine transport"/>
    <property type="evidence" value="ECO:0007669"/>
    <property type="project" value="TreeGrafter"/>
</dbReference>
<dbReference type="FunFam" id="1.10.3730.20:FF:000001">
    <property type="entry name" value="Quaternary ammonium compound resistance transporter SugE"/>
    <property type="match status" value="1"/>
</dbReference>
<dbReference type="Gene3D" id="1.10.3730.20">
    <property type="match status" value="1"/>
</dbReference>
<dbReference type="HAMAP" id="MF_01598">
    <property type="entry name" value="MdtJ"/>
    <property type="match status" value="1"/>
</dbReference>
<dbReference type="InterPro" id="IPR000390">
    <property type="entry name" value="Small_drug/metabolite_transptr"/>
</dbReference>
<dbReference type="InterPro" id="IPR045324">
    <property type="entry name" value="Small_multidrug_res"/>
</dbReference>
<dbReference type="InterPro" id="IPR023740">
    <property type="entry name" value="Spermidine_export_MdtJ"/>
</dbReference>
<dbReference type="NCBIfam" id="NF007767">
    <property type="entry name" value="PRK10452.1"/>
    <property type="match status" value="1"/>
</dbReference>
<dbReference type="PANTHER" id="PTHR30561">
    <property type="entry name" value="SMR FAMILY PROTON-DEPENDENT DRUG EFFLUX TRANSPORTER SUGE"/>
    <property type="match status" value="1"/>
</dbReference>
<dbReference type="PANTHER" id="PTHR30561:SF2">
    <property type="entry name" value="SPERMIDINE EXPORT PROTEIN MDTJ"/>
    <property type="match status" value="1"/>
</dbReference>
<dbReference type="Pfam" id="PF00893">
    <property type="entry name" value="Multi_Drug_Res"/>
    <property type="match status" value="1"/>
</dbReference>
<dbReference type="SUPFAM" id="SSF103481">
    <property type="entry name" value="Multidrug resistance efflux transporter EmrE"/>
    <property type="match status" value="1"/>
</dbReference>
<organism>
    <name type="scientific">Escherichia coli (strain K12 / MC4100 / BW2952)</name>
    <dbReference type="NCBI Taxonomy" id="595496"/>
    <lineage>
        <taxon>Bacteria</taxon>
        <taxon>Pseudomonadati</taxon>
        <taxon>Pseudomonadota</taxon>
        <taxon>Gammaproteobacteria</taxon>
        <taxon>Enterobacterales</taxon>
        <taxon>Enterobacteriaceae</taxon>
        <taxon>Escherichia</taxon>
    </lineage>
</organism>
<accession>C4ZY63</accession>
<feature type="chain" id="PRO_1000215675" description="Spermidine export protein MdtJ">
    <location>
        <begin position="1"/>
        <end position="121"/>
    </location>
</feature>
<feature type="transmembrane region" description="Helical" evidence="1">
    <location>
        <begin position="1"/>
        <end position="21"/>
    </location>
</feature>
<feature type="transmembrane region" description="Helical" evidence="1">
    <location>
        <begin position="32"/>
        <end position="52"/>
    </location>
</feature>
<feature type="transmembrane region" description="Helical" evidence="1">
    <location>
        <begin position="55"/>
        <end position="75"/>
    </location>
</feature>
<feature type="transmembrane region" description="Helical" evidence="1">
    <location>
        <begin position="82"/>
        <end position="102"/>
    </location>
</feature>
<gene>
    <name evidence="1" type="primary">mdtJ</name>
    <name type="ordered locus">BWG_1415</name>
</gene>
<evidence type="ECO:0000255" key="1">
    <source>
        <dbReference type="HAMAP-Rule" id="MF_01598"/>
    </source>
</evidence>
<name>MDTJ_ECOBW</name>
<comment type="function">
    <text evidence="1">Catalyzes the excretion of spermidine.</text>
</comment>
<comment type="subunit">
    <text evidence="1">Forms a complex with MdtI.</text>
</comment>
<comment type="subcellular location">
    <subcellularLocation>
        <location evidence="1">Cell inner membrane</location>
        <topology evidence="1">Multi-pass membrane protein</topology>
    </subcellularLocation>
</comment>
<comment type="similarity">
    <text evidence="1">Belongs to the drug/metabolite transporter (DMT) superfamily. Small multidrug resistance (SMR) (TC 2.A.7.1) family. MdtJ subfamily.</text>
</comment>
<sequence>MYIYWILLGLAIATEITGTLSMKWASVSEGNGGFILMLVMISLSYIFLSFAVKKIALGVAYALWEGIGILFITLFSVLLFDESLSLMKIAGLTTLVAGIVLIKSGTRKARKPELEVNHGAV</sequence>
<keyword id="KW-0997">Cell inner membrane</keyword>
<keyword id="KW-1003">Cell membrane</keyword>
<keyword id="KW-0472">Membrane</keyword>
<keyword id="KW-0812">Transmembrane</keyword>
<keyword id="KW-1133">Transmembrane helix</keyword>
<keyword id="KW-0813">Transport</keyword>
<protein>
    <recommendedName>
        <fullName evidence="1">Spermidine export protein MdtJ</fullName>
    </recommendedName>
</protein>
<proteinExistence type="inferred from homology"/>